<protein>
    <recommendedName>
        <fullName evidence="1">Nucleoside triphosphate pyrophosphatase</fullName>
        <ecNumber evidence="1">3.6.1.9</ecNumber>
    </recommendedName>
    <alternativeName>
        <fullName evidence="1">Nucleotide pyrophosphatase</fullName>
        <shortName evidence="1">Nucleotide PPase</shortName>
    </alternativeName>
</protein>
<gene>
    <name type="ordered locus">JJD26997_1428</name>
</gene>
<proteinExistence type="inferred from homology"/>
<sequence>MLILASSSISRANLLKTAKIDFKQVGFDYDENLDKNISPFLYVQKIVLEKEKQFLSALSKDFQNQNLLFADSIVCIDEKILTKAKDKKEAYEMLALQNGKYASILSAFLLVKPEKRVFSLSKTTLYFKNFDENALNDYVENNLYKSKAGCIMCEGFHQNFITQQVGNLSTALGLDIQTLKAYL</sequence>
<keyword id="KW-0963">Cytoplasm</keyword>
<keyword id="KW-0378">Hydrolase</keyword>
<keyword id="KW-0546">Nucleotide metabolism</keyword>
<comment type="function">
    <text evidence="1">Nucleoside triphosphate pyrophosphatase. May have a dual role in cell division arrest and in preventing the incorporation of modified nucleotides into cellular nucleic acids.</text>
</comment>
<comment type="catalytic activity">
    <reaction evidence="1">
        <text>a ribonucleoside 5'-triphosphate + H2O = a ribonucleoside 5'-phosphate + diphosphate + H(+)</text>
        <dbReference type="Rhea" id="RHEA:23996"/>
        <dbReference type="ChEBI" id="CHEBI:15377"/>
        <dbReference type="ChEBI" id="CHEBI:15378"/>
        <dbReference type="ChEBI" id="CHEBI:33019"/>
        <dbReference type="ChEBI" id="CHEBI:58043"/>
        <dbReference type="ChEBI" id="CHEBI:61557"/>
        <dbReference type="EC" id="3.6.1.9"/>
    </reaction>
</comment>
<comment type="catalytic activity">
    <reaction evidence="1">
        <text>a 2'-deoxyribonucleoside 5'-triphosphate + H2O = a 2'-deoxyribonucleoside 5'-phosphate + diphosphate + H(+)</text>
        <dbReference type="Rhea" id="RHEA:44644"/>
        <dbReference type="ChEBI" id="CHEBI:15377"/>
        <dbReference type="ChEBI" id="CHEBI:15378"/>
        <dbReference type="ChEBI" id="CHEBI:33019"/>
        <dbReference type="ChEBI" id="CHEBI:61560"/>
        <dbReference type="ChEBI" id="CHEBI:65317"/>
        <dbReference type="EC" id="3.6.1.9"/>
    </reaction>
</comment>
<comment type="cofactor">
    <cofactor evidence="1">
        <name>a divalent metal cation</name>
        <dbReference type="ChEBI" id="CHEBI:60240"/>
    </cofactor>
</comment>
<comment type="subcellular location">
    <subcellularLocation>
        <location evidence="1">Cytoplasm</location>
    </subcellularLocation>
</comment>
<comment type="similarity">
    <text evidence="1">Belongs to the Maf family.</text>
</comment>
<dbReference type="EC" id="3.6.1.9" evidence="1"/>
<dbReference type="EMBL" id="CP000768">
    <property type="protein sequence ID" value="ABS43217.1"/>
    <property type="molecule type" value="Genomic_DNA"/>
</dbReference>
<dbReference type="SMR" id="A7H4N2"/>
<dbReference type="KEGG" id="cjd:JJD26997_1428"/>
<dbReference type="HOGENOM" id="CLU_040416_2_2_7"/>
<dbReference type="Proteomes" id="UP000002302">
    <property type="component" value="Chromosome"/>
</dbReference>
<dbReference type="GO" id="GO:0005737">
    <property type="term" value="C:cytoplasm"/>
    <property type="evidence" value="ECO:0007669"/>
    <property type="project" value="UniProtKB-SubCell"/>
</dbReference>
<dbReference type="GO" id="GO:0047429">
    <property type="term" value="F:nucleoside triphosphate diphosphatase activity"/>
    <property type="evidence" value="ECO:0007669"/>
    <property type="project" value="UniProtKB-EC"/>
</dbReference>
<dbReference type="GO" id="GO:0009117">
    <property type="term" value="P:nucleotide metabolic process"/>
    <property type="evidence" value="ECO:0007669"/>
    <property type="project" value="UniProtKB-KW"/>
</dbReference>
<dbReference type="CDD" id="cd00555">
    <property type="entry name" value="Maf"/>
    <property type="match status" value="1"/>
</dbReference>
<dbReference type="Gene3D" id="3.90.950.10">
    <property type="match status" value="1"/>
</dbReference>
<dbReference type="HAMAP" id="MF_00528">
    <property type="entry name" value="Maf"/>
    <property type="match status" value="1"/>
</dbReference>
<dbReference type="InterPro" id="IPR029001">
    <property type="entry name" value="ITPase-like_fam"/>
</dbReference>
<dbReference type="InterPro" id="IPR003697">
    <property type="entry name" value="Maf-like"/>
</dbReference>
<dbReference type="NCBIfam" id="TIGR00172">
    <property type="entry name" value="maf"/>
    <property type="match status" value="1"/>
</dbReference>
<dbReference type="NCBIfam" id="NF003141">
    <property type="entry name" value="PRK04056.1"/>
    <property type="match status" value="1"/>
</dbReference>
<dbReference type="PANTHER" id="PTHR43213">
    <property type="entry name" value="BIFUNCTIONAL DTTP/UTP PYROPHOSPHATASE/METHYLTRANSFERASE PROTEIN-RELATED"/>
    <property type="match status" value="1"/>
</dbReference>
<dbReference type="PANTHER" id="PTHR43213:SF5">
    <property type="entry name" value="BIFUNCTIONAL DTTP_UTP PYROPHOSPHATASE_METHYLTRANSFERASE PROTEIN-RELATED"/>
    <property type="match status" value="1"/>
</dbReference>
<dbReference type="Pfam" id="PF02545">
    <property type="entry name" value="Maf"/>
    <property type="match status" value="1"/>
</dbReference>
<dbReference type="PIRSF" id="PIRSF006305">
    <property type="entry name" value="Maf"/>
    <property type="match status" value="1"/>
</dbReference>
<dbReference type="SUPFAM" id="SSF52972">
    <property type="entry name" value="ITPase-like"/>
    <property type="match status" value="1"/>
</dbReference>
<evidence type="ECO:0000255" key="1">
    <source>
        <dbReference type="HAMAP-Rule" id="MF_00528"/>
    </source>
</evidence>
<organism>
    <name type="scientific">Campylobacter jejuni subsp. doylei (strain ATCC BAA-1458 / RM4099 / 269.97)</name>
    <dbReference type="NCBI Taxonomy" id="360109"/>
    <lineage>
        <taxon>Bacteria</taxon>
        <taxon>Pseudomonadati</taxon>
        <taxon>Campylobacterota</taxon>
        <taxon>Epsilonproteobacteria</taxon>
        <taxon>Campylobacterales</taxon>
        <taxon>Campylobacteraceae</taxon>
        <taxon>Campylobacter</taxon>
    </lineage>
</organism>
<reference key="1">
    <citation type="submission" date="2007-07" db="EMBL/GenBank/DDBJ databases">
        <title>Complete genome sequence of Campylobacter jejuni subsp doylei 269.97 isolated from human blood.</title>
        <authorList>
            <person name="Fouts D.E."/>
            <person name="Mongodin E.F."/>
            <person name="Puiu D."/>
            <person name="Sebastian Y."/>
            <person name="Miller W.G."/>
            <person name="Mandrell R.E."/>
            <person name="Lastovica A.J."/>
            <person name="Nelson K.E."/>
        </authorList>
    </citation>
    <scope>NUCLEOTIDE SEQUENCE [LARGE SCALE GENOMIC DNA]</scope>
    <source>
        <strain>ATCC BAA-1458 / RM4099 / 269.97</strain>
    </source>
</reference>
<name>NTPP_CAMJD</name>
<accession>A7H4N2</accession>
<feature type="chain" id="PRO_1000060936" description="Nucleoside triphosphate pyrophosphatase">
    <location>
        <begin position="1"/>
        <end position="183"/>
    </location>
</feature>
<feature type="active site" description="Proton acceptor" evidence="1">
    <location>
        <position position="71"/>
    </location>
</feature>